<protein>
    <recommendedName>
        <fullName evidence="1">3-dehydroquinate dehydratase</fullName>
        <shortName evidence="1">3-dehydroquinase</shortName>
        <ecNumber evidence="1">4.2.1.10</ecNumber>
    </recommendedName>
    <alternativeName>
        <fullName evidence="1">Type II DHQase</fullName>
    </alternativeName>
</protein>
<keyword id="KW-0028">Amino-acid biosynthesis</keyword>
<keyword id="KW-0057">Aromatic amino acid biosynthesis</keyword>
<keyword id="KW-0456">Lyase</keyword>
<proteinExistence type="inferred from homology"/>
<sequence>MATLLVLHGPNLNLLGTREPDKYGATTLAEINQDLERRAREGGHHLLHLQSNAEYELIERIHAAKSEGVDFILINPAAFTHTSVALRDALLAVSIPFIEVHLSNVHKREPFRHHSYFSDVAVGVICGLGASGYRLALEAALEQLTGRA</sequence>
<comment type="function">
    <text evidence="1">Catalyzes a trans-dehydration via an enolate intermediate.</text>
</comment>
<comment type="catalytic activity">
    <reaction evidence="1">
        <text>3-dehydroquinate = 3-dehydroshikimate + H2O</text>
        <dbReference type="Rhea" id="RHEA:21096"/>
        <dbReference type="ChEBI" id="CHEBI:15377"/>
        <dbReference type="ChEBI" id="CHEBI:16630"/>
        <dbReference type="ChEBI" id="CHEBI:32364"/>
        <dbReference type="EC" id="4.2.1.10"/>
    </reaction>
</comment>
<comment type="pathway">
    <text evidence="1">Metabolic intermediate biosynthesis; chorismate biosynthesis; chorismate from D-erythrose 4-phosphate and phosphoenolpyruvate: step 3/7.</text>
</comment>
<comment type="subunit">
    <text evidence="1">Homododecamer.</text>
</comment>
<comment type="similarity">
    <text evidence="1">Belongs to the type-II 3-dehydroquinase family.</text>
</comment>
<reference key="1">
    <citation type="submission" date="2007-04" db="EMBL/GenBank/DDBJ databases">
        <title>Complete sequence of Pseudomonas mendocina ymp.</title>
        <authorList>
            <consortium name="US DOE Joint Genome Institute"/>
            <person name="Copeland A."/>
            <person name="Lucas S."/>
            <person name="Lapidus A."/>
            <person name="Barry K."/>
            <person name="Glavina del Rio T."/>
            <person name="Dalin E."/>
            <person name="Tice H."/>
            <person name="Pitluck S."/>
            <person name="Kiss H."/>
            <person name="Brettin T."/>
            <person name="Detter J.C."/>
            <person name="Bruce D."/>
            <person name="Han C."/>
            <person name="Schmutz J."/>
            <person name="Larimer F."/>
            <person name="Land M."/>
            <person name="Hauser L."/>
            <person name="Kyrpides N."/>
            <person name="Mikhailova N."/>
            <person name="Hersman L."/>
            <person name="Dubois J."/>
            <person name="Maurice P."/>
            <person name="Richardson P."/>
        </authorList>
    </citation>
    <scope>NUCLEOTIDE SEQUENCE [LARGE SCALE GENOMIC DNA]</scope>
    <source>
        <strain>ymp</strain>
    </source>
</reference>
<organism>
    <name type="scientific">Ectopseudomonas mendocina (strain ymp)</name>
    <name type="common">Pseudomonas mendocina</name>
    <dbReference type="NCBI Taxonomy" id="399739"/>
    <lineage>
        <taxon>Bacteria</taxon>
        <taxon>Pseudomonadati</taxon>
        <taxon>Pseudomonadota</taxon>
        <taxon>Gammaproteobacteria</taxon>
        <taxon>Pseudomonadales</taxon>
        <taxon>Pseudomonadaceae</taxon>
        <taxon>Ectopseudomonas</taxon>
    </lineage>
</organism>
<accession>A4XQ67</accession>
<evidence type="ECO:0000255" key="1">
    <source>
        <dbReference type="HAMAP-Rule" id="MF_00169"/>
    </source>
</evidence>
<gene>
    <name evidence="1" type="primary">aroQ</name>
    <name type="ordered locus">Pmen_0715</name>
</gene>
<dbReference type="EC" id="4.2.1.10" evidence="1"/>
<dbReference type="EMBL" id="CP000680">
    <property type="protein sequence ID" value="ABP83483.1"/>
    <property type="molecule type" value="Genomic_DNA"/>
</dbReference>
<dbReference type="SMR" id="A4XQ67"/>
<dbReference type="STRING" id="399739.Pmen_0715"/>
<dbReference type="KEGG" id="pmy:Pmen_0715"/>
<dbReference type="PATRIC" id="fig|399739.8.peg.725"/>
<dbReference type="eggNOG" id="COG0757">
    <property type="taxonomic scope" value="Bacteria"/>
</dbReference>
<dbReference type="HOGENOM" id="CLU_090968_1_0_6"/>
<dbReference type="OrthoDB" id="9790793at2"/>
<dbReference type="UniPathway" id="UPA00053">
    <property type="reaction ID" value="UER00086"/>
</dbReference>
<dbReference type="GO" id="GO:0003855">
    <property type="term" value="F:3-dehydroquinate dehydratase activity"/>
    <property type="evidence" value="ECO:0007669"/>
    <property type="project" value="UniProtKB-UniRule"/>
</dbReference>
<dbReference type="GO" id="GO:0008652">
    <property type="term" value="P:amino acid biosynthetic process"/>
    <property type="evidence" value="ECO:0007669"/>
    <property type="project" value="UniProtKB-KW"/>
</dbReference>
<dbReference type="GO" id="GO:0009073">
    <property type="term" value="P:aromatic amino acid family biosynthetic process"/>
    <property type="evidence" value="ECO:0007669"/>
    <property type="project" value="UniProtKB-KW"/>
</dbReference>
<dbReference type="GO" id="GO:0009423">
    <property type="term" value="P:chorismate biosynthetic process"/>
    <property type="evidence" value="ECO:0007669"/>
    <property type="project" value="UniProtKB-UniRule"/>
</dbReference>
<dbReference type="GO" id="GO:0019631">
    <property type="term" value="P:quinate catabolic process"/>
    <property type="evidence" value="ECO:0007669"/>
    <property type="project" value="TreeGrafter"/>
</dbReference>
<dbReference type="CDD" id="cd00466">
    <property type="entry name" value="DHQase_II"/>
    <property type="match status" value="1"/>
</dbReference>
<dbReference type="Gene3D" id="3.40.50.9100">
    <property type="entry name" value="Dehydroquinase, class II"/>
    <property type="match status" value="1"/>
</dbReference>
<dbReference type="HAMAP" id="MF_00169">
    <property type="entry name" value="AroQ"/>
    <property type="match status" value="1"/>
</dbReference>
<dbReference type="InterPro" id="IPR001874">
    <property type="entry name" value="DHquinase_II"/>
</dbReference>
<dbReference type="InterPro" id="IPR018509">
    <property type="entry name" value="DHquinase_II_CS"/>
</dbReference>
<dbReference type="InterPro" id="IPR036441">
    <property type="entry name" value="DHquinase_II_sf"/>
</dbReference>
<dbReference type="NCBIfam" id="TIGR01088">
    <property type="entry name" value="aroQ"/>
    <property type="match status" value="1"/>
</dbReference>
<dbReference type="NCBIfam" id="NF003804">
    <property type="entry name" value="PRK05395.1-1"/>
    <property type="match status" value="1"/>
</dbReference>
<dbReference type="NCBIfam" id="NF003805">
    <property type="entry name" value="PRK05395.1-2"/>
    <property type="match status" value="1"/>
</dbReference>
<dbReference type="NCBIfam" id="NF003806">
    <property type="entry name" value="PRK05395.1-3"/>
    <property type="match status" value="1"/>
</dbReference>
<dbReference type="NCBIfam" id="NF003807">
    <property type="entry name" value="PRK05395.1-4"/>
    <property type="match status" value="1"/>
</dbReference>
<dbReference type="PANTHER" id="PTHR21272">
    <property type="entry name" value="CATABOLIC 3-DEHYDROQUINASE"/>
    <property type="match status" value="1"/>
</dbReference>
<dbReference type="PANTHER" id="PTHR21272:SF3">
    <property type="entry name" value="CATABOLIC 3-DEHYDROQUINASE"/>
    <property type="match status" value="1"/>
</dbReference>
<dbReference type="Pfam" id="PF01220">
    <property type="entry name" value="DHquinase_II"/>
    <property type="match status" value="1"/>
</dbReference>
<dbReference type="PIRSF" id="PIRSF001399">
    <property type="entry name" value="DHquinase_II"/>
    <property type="match status" value="1"/>
</dbReference>
<dbReference type="SUPFAM" id="SSF52304">
    <property type="entry name" value="Type II 3-dehydroquinate dehydratase"/>
    <property type="match status" value="1"/>
</dbReference>
<dbReference type="PROSITE" id="PS01029">
    <property type="entry name" value="DEHYDROQUINASE_II"/>
    <property type="match status" value="1"/>
</dbReference>
<name>AROQ_ECTM1</name>
<feature type="chain" id="PRO_1000023498" description="3-dehydroquinate dehydratase">
    <location>
        <begin position="1"/>
        <end position="148"/>
    </location>
</feature>
<feature type="active site" description="Proton acceptor" evidence="1">
    <location>
        <position position="23"/>
    </location>
</feature>
<feature type="active site" description="Proton donor" evidence="1">
    <location>
        <position position="101"/>
    </location>
</feature>
<feature type="binding site" evidence="1">
    <location>
        <position position="75"/>
    </location>
    <ligand>
        <name>substrate</name>
    </ligand>
</feature>
<feature type="binding site" evidence="1">
    <location>
        <position position="81"/>
    </location>
    <ligand>
        <name>substrate</name>
    </ligand>
</feature>
<feature type="binding site" evidence="1">
    <location>
        <position position="88"/>
    </location>
    <ligand>
        <name>substrate</name>
    </ligand>
</feature>
<feature type="binding site" evidence="1">
    <location>
        <begin position="102"/>
        <end position="103"/>
    </location>
    <ligand>
        <name>substrate</name>
    </ligand>
</feature>
<feature type="binding site" evidence="1">
    <location>
        <position position="112"/>
    </location>
    <ligand>
        <name>substrate</name>
    </ligand>
</feature>
<feature type="site" description="Transition state stabilizer" evidence="1">
    <location>
        <position position="18"/>
    </location>
</feature>